<evidence type="ECO:0000269" key="1">
    <source>
    </source>
</evidence>
<evidence type="ECO:0000303" key="2">
    <source>
    </source>
</evidence>
<evidence type="ECO:0000305" key="3"/>
<evidence type="ECO:0000312" key="4">
    <source>
        <dbReference type="Araport" id="AT5G23220"/>
    </source>
</evidence>
<evidence type="ECO:0000312" key="5">
    <source>
        <dbReference type="EMBL" id="BAB11177.1"/>
    </source>
</evidence>
<name>NIC3_ARATH</name>
<sequence>MASSSTRKYETRKRDPNSKIAALLVIDMQNHFSSMAKPILNNVLTTIDICRRASVPVFFTRHNHKSPTDHGMLGEWCNGDVILDGTTDSEIIQEIQGQVTGPDEMVEKNTYSAFNKTRLQENLEKIGVKEVIVIGVMTNLCCETTAREAFIKGFRVFFSTDATATFNEELHEATLMNLAFGFAYLVDCDKLRRSLLGN</sequence>
<protein>
    <recommendedName>
        <fullName evidence="3">Nicotinamidase 3</fullName>
        <shortName evidence="2">AtNIC3</shortName>
        <ecNumber evidence="1">3.5.1.19</ecNumber>
    </recommendedName>
    <alternativeName>
        <fullName>Nicotinamide deamidase 3</fullName>
    </alternativeName>
</protein>
<gene>
    <name evidence="2" type="primary">NIC3</name>
    <name evidence="4" type="ordered locus">At5g23220</name>
    <name evidence="5" type="ORF">MKD15.8</name>
</gene>
<feature type="chain" id="PRO_0000431489" description="Nicotinamidase 3">
    <location>
        <begin position="1"/>
        <end position="198"/>
    </location>
</feature>
<comment type="function">
    <text evidence="1">Catalyzes the deamidation of nicotinamide, an early step in the NAD(+) salvage pathway. Prevents the accumulation of intracellular nicotinamide, a known inhibitor of poly(ADP-ribose) polymerases (PARP enzymes).</text>
</comment>
<comment type="catalytic activity">
    <reaction evidence="1">
        <text>nicotinamide + H2O = nicotinate + NH4(+)</text>
        <dbReference type="Rhea" id="RHEA:14545"/>
        <dbReference type="ChEBI" id="CHEBI:15377"/>
        <dbReference type="ChEBI" id="CHEBI:17154"/>
        <dbReference type="ChEBI" id="CHEBI:28938"/>
        <dbReference type="ChEBI" id="CHEBI:32544"/>
        <dbReference type="EC" id="3.5.1.19"/>
    </reaction>
</comment>
<comment type="pathway">
    <text evidence="3">Cofactor biosynthesis; nicotinate biosynthesis; nicotinate from nicotinamide: step 1/1.</text>
</comment>
<comment type="similarity">
    <text evidence="3">Belongs to the isochorismatase family.</text>
</comment>
<reference key="1">
    <citation type="journal article" date="1997" name="DNA Res.">
        <title>Structural analysis of Arabidopsis thaliana chromosome 5. III. Sequence features of the regions of 1,191,918 bp covered by seventeen physically assigned P1 clones.</title>
        <authorList>
            <person name="Nakamura Y."/>
            <person name="Sato S."/>
            <person name="Kaneko T."/>
            <person name="Kotani H."/>
            <person name="Asamizu E."/>
            <person name="Miyajima N."/>
            <person name="Tabata S."/>
        </authorList>
    </citation>
    <scope>NUCLEOTIDE SEQUENCE [LARGE SCALE GENOMIC DNA]</scope>
    <source>
        <strain>cv. Columbia</strain>
    </source>
</reference>
<reference key="2">
    <citation type="journal article" date="2017" name="Plant J.">
        <title>Araport11: a complete reannotation of the Arabidopsis thaliana reference genome.</title>
        <authorList>
            <person name="Cheng C.Y."/>
            <person name="Krishnakumar V."/>
            <person name="Chan A.P."/>
            <person name="Thibaud-Nissen F."/>
            <person name="Schobel S."/>
            <person name="Town C.D."/>
        </authorList>
    </citation>
    <scope>GENOME REANNOTATION</scope>
    <source>
        <strain>cv. Columbia</strain>
    </source>
</reference>
<reference key="3">
    <citation type="journal article" date="2003" name="Science">
        <title>Empirical analysis of transcriptional activity in the Arabidopsis genome.</title>
        <authorList>
            <person name="Yamada K."/>
            <person name="Lim J."/>
            <person name="Dale J.M."/>
            <person name="Chen H."/>
            <person name="Shinn P."/>
            <person name="Palm C.J."/>
            <person name="Southwick A.M."/>
            <person name="Wu H.C."/>
            <person name="Kim C.J."/>
            <person name="Nguyen M."/>
            <person name="Pham P.K."/>
            <person name="Cheuk R.F."/>
            <person name="Karlin-Newmann G."/>
            <person name="Liu S.X."/>
            <person name="Lam B."/>
            <person name="Sakano H."/>
            <person name="Wu T."/>
            <person name="Yu G."/>
            <person name="Miranda M."/>
            <person name="Quach H.L."/>
            <person name="Tripp M."/>
            <person name="Chang C.H."/>
            <person name="Lee J.M."/>
            <person name="Toriumi M.J."/>
            <person name="Chan M.M."/>
            <person name="Tang C.C."/>
            <person name="Onodera C.S."/>
            <person name="Deng J.M."/>
            <person name="Akiyama K."/>
            <person name="Ansari Y."/>
            <person name="Arakawa T."/>
            <person name="Banh J."/>
            <person name="Banno F."/>
            <person name="Bowser L."/>
            <person name="Brooks S.Y."/>
            <person name="Carninci P."/>
            <person name="Chao Q."/>
            <person name="Choy N."/>
            <person name="Enju A."/>
            <person name="Goldsmith A.D."/>
            <person name="Gurjal M."/>
            <person name="Hansen N.F."/>
            <person name="Hayashizaki Y."/>
            <person name="Johnson-Hopson C."/>
            <person name="Hsuan V.W."/>
            <person name="Iida K."/>
            <person name="Karnes M."/>
            <person name="Khan S."/>
            <person name="Koesema E."/>
            <person name="Ishida J."/>
            <person name="Jiang P.X."/>
            <person name="Jones T."/>
            <person name="Kawai J."/>
            <person name="Kamiya A."/>
            <person name="Meyers C."/>
            <person name="Nakajima M."/>
            <person name="Narusaka M."/>
            <person name="Seki M."/>
            <person name="Sakurai T."/>
            <person name="Satou M."/>
            <person name="Tamse R."/>
            <person name="Vaysberg M."/>
            <person name="Wallender E.K."/>
            <person name="Wong C."/>
            <person name="Yamamura Y."/>
            <person name="Yuan S."/>
            <person name="Shinozaki K."/>
            <person name="Davis R.W."/>
            <person name="Theologis A."/>
            <person name="Ecker J.R."/>
        </authorList>
    </citation>
    <scope>NUCLEOTIDE SEQUENCE [LARGE SCALE MRNA]</scope>
    <source>
        <strain>cv. Columbia</strain>
    </source>
</reference>
<reference key="4">
    <citation type="journal article" date="2007" name="Plant J.">
        <title>Nicotinamidase activity is important for germination.</title>
        <authorList>
            <person name="Hunt L."/>
            <person name="Holdsworth M.J."/>
            <person name="Gray J.E."/>
        </authorList>
    </citation>
    <scope>FUNCTION</scope>
    <scope>CATALYTIC ACTIVITY</scope>
</reference>
<accession>Q9FMX8</accession>
<keyword id="KW-0378">Hydrolase</keyword>
<keyword id="KW-0662">Pyridine nucleotide biosynthesis</keyword>
<keyword id="KW-1185">Reference proteome</keyword>
<proteinExistence type="evidence at protein level"/>
<dbReference type="EC" id="3.5.1.19" evidence="1"/>
<dbReference type="EMBL" id="AB007648">
    <property type="protein sequence ID" value="BAB11177.1"/>
    <property type="molecule type" value="Genomic_DNA"/>
</dbReference>
<dbReference type="EMBL" id="CP002688">
    <property type="protein sequence ID" value="AED93138.1"/>
    <property type="molecule type" value="Genomic_DNA"/>
</dbReference>
<dbReference type="EMBL" id="BT002920">
    <property type="protein sequence ID" value="AAO22736.1"/>
    <property type="molecule type" value="mRNA"/>
</dbReference>
<dbReference type="EMBL" id="BT004341">
    <property type="protein sequence ID" value="AAO42335.1"/>
    <property type="molecule type" value="mRNA"/>
</dbReference>
<dbReference type="RefSeq" id="NP_197713.1">
    <property type="nucleotide sequence ID" value="NM_122228.3"/>
</dbReference>
<dbReference type="SMR" id="Q9FMX8"/>
<dbReference type="FunCoup" id="Q9FMX8">
    <property type="interactions" value="267"/>
</dbReference>
<dbReference type="IntAct" id="Q9FMX8">
    <property type="interactions" value="1"/>
</dbReference>
<dbReference type="STRING" id="3702.Q9FMX8"/>
<dbReference type="iPTMnet" id="Q9FMX8"/>
<dbReference type="PaxDb" id="3702-AT5G23220.1"/>
<dbReference type="ProteomicsDB" id="251163"/>
<dbReference type="EnsemblPlants" id="AT5G23220.1">
    <property type="protein sequence ID" value="AT5G23220.1"/>
    <property type="gene ID" value="AT5G23220"/>
</dbReference>
<dbReference type="GeneID" id="832386"/>
<dbReference type="Gramene" id="AT5G23220.1">
    <property type="protein sequence ID" value="AT5G23220.1"/>
    <property type="gene ID" value="AT5G23220"/>
</dbReference>
<dbReference type="KEGG" id="ath:AT5G23220"/>
<dbReference type="Araport" id="AT5G23220"/>
<dbReference type="TAIR" id="AT5G23220">
    <property type="gene designation" value="NIC3"/>
</dbReference>
<dbReference type="eggNOG" id="ENOG502QQB1">
    <property type="taxonomic scope" value="Eukaryota"/>
</dbReference>
<dbReference type="HOGENOM" id="CLU_068979_8_3_1"/>
<dbReference type="InParanoid" id="Q9FMX8"/>
<dbReference type="OMA" id="MAMASCC"/>
<dbReference type="OrthoDB" id="167809at2759"/>
<dbReference type="PhylomeDB" id="Q9FMX8"/>
<dbReference type="BioCyc" id="ARA:AT5G23220-MONOMER"/>
<dbReference type="UniPathway" id="UPA00830">
    <property type="reaction ID" value="UER00790"/>
</dbReference>
<dbReference type="PRO" id="PR:Q9FMX8"/>
<dbReference type="Proteomes" id="UP000006548">
    <property type="component" value="Chromosome 5"/>
</dbReference>
<dbReference type="ExpressionAtlas" id="Q9FMX8">
    <property type="expression patterns" value="baseline and differential"/>
</dbReference>
<dbReference type="GO" id="GO:0008936">
    <property type="term" value="F:nicotinamidase activity"/>
    <property type="evidence" value="ECO:0000314"/>
    <property type="project" value="TAIR"/>
</dbReference>
<dbReference type="GO" id="GO:0019363">
    <property type="term" value="P:pyridine nucleotide biosynthetic process"/>
    <property type="evidence" value="ECO:0007669"/>
    <property type="project" value="UniProtKB-KW"/>
</dbReference>
<dbReference type="CDD" id="cd00431">
    <property type="entry name" value="cysteine_hydrolases"/>
    <property type="match status" value="1"/>
</dbReference>
<dbReference type="FunFam" id="3.40.50.850:FF:000020">
    <property type="entry name" value="Nicotinamidase 2"/>
    <property type="match status" value="1"/>
</dbReference>
<dbReference type="Gene3D" id="3.40.50.850">
    <property type="entry name" value="Isochorismatase-like"/>
    <property type="match status" value="1"/>
</dbReference>
<dbReference type="InterPro" id="IPR000868">
    <property type="entry name" value="Isochorismatase-like_dom"/>
</dbReference>
<dbReference type="InterPro" id="IPR050272">
    <property type="entry name" value="Isochorismatase-like_hydrls"/>
</dbReference>
<dbReference type="InterPro" id="IPR036380">
    <property type="entry name" value="Isochorismatase-like_sf"/>
</dbReference>
<dbReference type="PANTHER" id="PTHR43540:SF6">
    <property type="entry name" value="ISOCHORISMATASE-LIKE DOMAIN-CONTAINING PROTEIN"/>
    <property type="match status" value="1"/>
</dbReference>
<dbReference type="PANTHER" id="PTHR43540">
    <property type="entry name" value="PEROXYUREIDOACRYLATE/UREIDOACRYLATE AMIDOHYDROLASE-RELATED"/>
    <property type="match status" value="1"/>
</dbReference>
<dbReference type="Pfam" id="PF00857">
    <property type="entry name" value="Isochorismatase"/>
    <property type="match status" value="1"/>
</dbReference>
<dbReference type="SUPFAM" id="SSF52499">
    <property type="entry name" value="Isochorismatase-like hydrolases"/>
    <property type="match status" value="1"/>
</dbReference>
<organism>
    <name type="scientific">Arabidopsis thaliana</name>
    <name type="common">Mouse-ear cress</name>
    <dbReference type="NCBI Taxonomy" id="3702"/>
    <lineage>
        <taxon>Eukaryota</taxon>
        <taxon>Viridiplantae</taxon>
        <taxon>Streptophyta</taxon>
        <taxon>Embryophyta</taxon>
        <taxon>Tracheophyta</taxon>
        <taxon>Spermatophyta</taxon>
        <taxon>Magnoliopsida</taxon>
        <taxon>eudicotyledons</taxon>
        <taxon>Gunneridae</taxon>
        <taxon>Pentapetalae</taxon>
        <taxon>rosids</taxon>
        <taxon>malvids</taxon>
        <taxon>Brassicales</taxon>
        <taxon>Brassicaceae</taxon>
        <taxon>Camelineae</taxon>
        <taxon>Arabidopsis</taxon>
    </lineage>
</organism>